<dbReference type="EMBL" id="CP001279">
    <property type="protein sequence ID" value="ACM93045.1"/>
    <property type="molecule type" value="Genomic_DNA"/>
</dbReference>
<dbReference type="RefSeq" id="WP_015902097.1">
    <property type="nucleotide sequence ID" value="NC_012115.1"/>
</dbReference>
<dbReference type="SMR" id="B9L7J8"/>
<dbReference type="STRING" id="598659.NAMH_0182"/>
<dbReference type="KEGG" id="nam:NAMH_0182"/>
<dbReference type="eggNOG" id="COG0048">
    <property type="taxonomic scope" value="Bacteria"/>
</dbReference>
<dbReference type="HOGENOM" id="CLU_104295_1_2_7"/>
<dbReference type="OrthoDB" id="9802366at2"/>
<dbReference type="Proteomes" id="UP000000448">
    <property type="component" value="Chromosome"/>
</dbReference>
<dbReference type="GO" id="GO:0015935">
    <property type="term" value="C:small ribosomal subunit"/>
    <property type="evidence" value="ECO:0007669"/>
    <property type="project" value="InterPro"/>
</dbReference>
<dbReference type="GO" id="GO:0019843">
    <property type="term" value="F:rRNA binding"/>
    <property type="evidence" value="ECO:0007669"/>
    <property type="project" value="UniProtKB-UniRule"/>
</dbReference>
<dbReference type="GO" id="GO:0003735">
    <property type="term" value="F:structural constituent of ribosome"/>
    <property type="evidence" value="ECO:0007669"/>
    <property type="project" value="InterPro"/>
</dbReference>
<dbReference type="GO" id="GO:0000049">
    <property type="term" value="F:tRNA binding"/>
    <property type="evidence" value="ECO:0007669"/>
    <property type="project" value="UniProtKB-UniRule"/>
</dbReference>
<dbReference type="GO" id="GO:0006412">
    <property type="term" value="P:translation"/>
    <property type="evidence" value="ECO:0007669"/>
    <property type="project" value="UniProtKB-UniRule"/>
</dbReference>
<dbReference type="CDD" id="cd03368">
    <property type="entry name" value="Ribosomal_S12"/>
    <property type="match status" value="1"/>
</dbReference>
<dbReference type="FunFam" id="2.40.50.140:FF:000001">
    <property type="entry name" value="30S ribosomal protein S12"/>
    <property type="match status" value="1"/>
</dbReference>
<dbReference type="Gene3D" id="2.40.50.140">
    <property type="entry name" value="Nucleic acid-binding proteins"/>
    <property type="match status" value="1"/>
</dbReference>
<dbReference type="HAMAP" id="MF_00403_B">
    <property type="entry name" value="Ribosomal_uS12_B"/>
    <property type="match status" value="1"/>
</dbReference>
<dbReference type="InterPro" id="IPR012340">
    <property type="entry name" value="NA-bd_OB-fold"/>
</dbReference>
<dbReference type="InterPro" id="IPR006032">
    <property type="entry name" value="Ribosomal_uS12"/>
</dbReference>
<dbReference type="InterPro" id="IPR005679">
    <property type="entry name" value="Ribosomal_uS12_bac"/>
</dbReference>
<dbReference type="NCBIfam" id="TIGR00981">
    <property type="entry name" value="rpsL_bact"/>
    <property type="match status" value="1"/>
</dbReference>
<dbReference type="PANTHER" id="PTHR11652">
    <property type="entry name" value="30S RIBOSOMAL PROTEIN S12 FAMILY MEMBER"/>
    <property type="match status" value="1"/>
</dbReference>
<dbReference type="Pfam" id="PF00164">
    <property type="entry name" value="Ribosom_S12_S23"/>
    <property type="match status" value="1"/>
</dbReference>
<dbReference type="PIRSF" id="PIRSF002133">
    <property type="entry name" value="Ribosomal_S12/S23"/>
    <property type="match status" value="1"/>
</dbReference>
<dbReference type="PRINTS" id="PR01034">
    <property type="entry name" value="RIBOSOMALS12"/>
</dbReference>
<dbReference type="SUPFAM" id="SSF50249">
    <property type="entry name" value="Nucleic acid-binding proteins"/>
    <property type="match status" value="1"/>
</dbReference>
<dbReference type="PROSITE" id="PS00055">
    <property type="entry name" value="RIBOSOMAL_S12"/>
    <property type="match status" value="1"/>
</dbReference>
<name>RS12_NAUPA</name>
<feature type="chain" id="PRO_1000134647" description="Small ribosomal subunit protein uS12">
    <location>
        <begin position="1"/>
        <end position="127"/>
    </location>
</feature>
<feature type="modified residue" description="3-methylthioaspartic acid" evidence="1">
    <location>
        <position position="89"/>
    </location>
</feature>
<keyword id="KW-0488">Methylation</keyword>
<keyword id="KW-0687">Ribonucleoprotein</keyword>
<keyword id="KW-0689">Ribosomal protein</keyword>
<keyword id="KW-0694">RNA-binding</keyword>
<keyword id="KW-0699">rRNA-binding</keyword>
<keyword id="KW-0820">tRNA-binding</keyword>
<sequence>MPTINQLVRKGRKQVIKKSKSPALVSCPQRRGVCTRVYTTTPKKPNSALRKVAKVRLTSGYEVISYIPGEGHNLQEHSIVLVRGGRVKDLPGVKYHIVRGALDTAGVKGRVHSRSKYGTKKADAGKK</sequence>
<proteinExistence type="inferred from homology"/>
<reference key="1">
    <citation type="journal article" date="2009" name="PLoS Genet.">
        <title>Adaptations to submarine hydrothermal environments exemplified by the genome of Nautilia profundicola.</title>
        <authorList>
            <person name="Campbell B.J."/>
            <person name="Smith J.L."/>
            <person name="Hanson T.E."/>
            <person name="Klotz M.G."/>
            <person name="Stein L.Y."/>
            <person name="Lee C.K."/>
            <person name="Wu D."/>
            <person name="Robinson J.M."/>
            <person name="Khouri H.M."/>
            <person name="Eisen J.A."/>
            <person name="Cary S.C."/>
        </authorList>
    </citation>
    <scope>NUCLEOTIDE SEQUENCE [LARGE SCALE GENOMIC DNA]</scope>
    <source>
        <strain>ATCC BAA-1463 / DSM 18972 / AmH</strain>
    </source>
</reference>
<protein>
    <recommendedName>
        <fullName evidence="2">Small ribosomal subunit protein uS12</fullName>
    </recommendedName>
    <alternativeName>
        <fullName evidence="3">30S ribosomal protein S12</fullName>
    </alternativeName>
</protein>
<comment type="function">
    <text evidence="2">With S4 and S5 plays an important role in translational accuracy.</text>
</comment>
<comment type="function">
    <text evidence="2">Interacts with and stabilizes bases of the 16S rRNA that are involved in tRNA selection in the A site and with the mRNA backbone. Located at the interface of the 30S and 50S subunits, it traverses the body of the 30S subunit contacting proteins on the other side and probably holding the rRNA structure together. The combined cluster of proteins S8, S12 and S17 appears to hold together the shoulder and platform of the 30S subunit.</text>
</comment>
<comment type="subunit">
    <text evidence="2">Part of the 30S ribosomal subunit. Contacts proteins S8 and S17. May interact with IF1 in the 30S initiation complex.</text>
</comment>
<comment type="similarity">
    <text evidence="2">Belongs to the universal ribosomal protein uS12 family.</text>
</comment>
<evidence type="ECO:0000250" key="1"/>
<evidence type="ECO:0000255" key="2">
    <source>
        <dbReference type="HAMAP-Rule" id="MF_00403"/>
    </source>
</evidence>
<evidence type="ECO:0000305" key="3"/>
<organism>
    <name type="scientific">Nautilia profundicola (strain ATCC BAA-1463 / DSM 18972 / AmH)</name>
    <dbReference type="NCBI Taxonomy" id="598659"/>
    <lineage>
        <taxon>Bacteria</taxon>
        <taxon>Pseudomonadati</taxon>
        <taxon>Campylobacterota</taxon>
        <taxon>Epsilonproteobacteria</taxon>
        <taxon>Nautiliales</taxon>
        <taxon>Nautiliaceae</taxon>
        <taxon>Nautilia</taxon>
    </lineage>
</organism>
<accession>B9L7J8</accession>
<gene>
    <name evidence="2" type="primary">rpsL</name>
    <name type="ordered locus">NAMH_0182</name>
</gene>